<reference key="1">
    <citation type="journal article" date="2008" name="J. Bacteriol.">
        <title>The complete genome sequence of Actinobacillus pleuropneumoniae L20 (serotype 5b).</title>
        <authorList>
            <person name="Foote S.J."/>
            <person name="Bosse J.T."/>
            <person name="Bouevitch A.B."/>
            <person name="Langford P.R."/>
            <person name="Young N.M."/>
            <person name="Nash J.H.E."/>
        </authorList>
    </citation>
    <scope>NUCLEOTIDE SEQUENCE [LARGE SCALE GENOMIC DNA]</scope>
    <source>
        <strain>L20</strain>
    </source>
</reference>
<accession>A3N1A7</accession>
<keyword id="KW-0031">Aminopeptidase</keyword>
<keyword id="KW-0963">Cytoplasm</keyword>
<keyword id="KW-0378">Hydrolase</keyword>
<keyword id="KW-0464">Manganese</keyword>
<keyword id="KW-0479">Metal-binding</keyword>
<keyword id="KW-0645">Protease</keyword>
<keyword id="KW-1185">Reference proteome</keyword>
<protein>
    <recommendedName>
        <fullName evidence="1">Probable cytosol aminopeptidase</fullName>
        <ecNumber evidence="1">3.4.11.1</ecNumber>
    </recommendedName>
    <alternativeName>
        <fullName evidence="1">Leucine aminopeptidase</fullName>
        <shortName evidence="1">LAP</shortName>
        <ecNumber evidence="1">3.4.11.10</ecNumber>
    </alternativeName>
    <alternativeName>
        <fullName evidence="1">Leucyl aminopeptidase</fullName>
    </alternativeName>
</protein>
<dbReference type="EC" id="3.4.11.1" evidence="1"/>
<dbReference type="EC" id="3.4.11.10" evidence="1"/>
<dbReference type="EMBL" id="CP000569">
    <property type="protein sequence ID" value="ABN74193.1"/>
    <property type="molecule type" value="Genomic_DNA"/>
</dbReference>
<dbReference type="RefSeq" id="WP_009875402.1">
    <property type="nucleotide sequence ID" value="NC_009053.1"/>
</dbReference>
<dbReference type="SMR" id="A3N1A7"/>
<dbReference type="STRING" id="416269.APL_1101"/>
<dbReference type="MEROPS" id="M17.003"/>
<dbReference type="EnsemblBacteria" id="ABN74193">
    <property type="protein sequence ID" value="ABN74193"/>
    <property type="gene ID" value="APL_1101"/>
</dbReference>
<dbReference type="KEGG" id="apl:APL_1101"/>
<dbReference type="PATRIC" id="fig|416269.6.peg.1149"/>
<dbReference type="eggNOG" id="COG0260">
    <property type="taxonomic scope" value="Bacteria"/>
</dbReference>
<dbReference type="HOGENOM" id="CLU_013734_0_0_6"/>
<dbReference type="Proteomes" id="UP000001432">
    <property type="component" value="Chromosome"/>
</dbReference>
<dbReference type="GO" id="GO:0005737">
    <property type="term" value="C:cytoplasm"/>
    <property type="evidence" value="ECO:0007669"/>
    <property type="project" value="UniProtKB-SubCell"/>
</dbReference>
<dbReference type="GO" id="GO:0030145">
    <property type="term" value="F:manganese ion binding"/>
    <property type="evidence" value="ECO:0007669"/>
    <property type="project" value="UniProtKB-UniRule"/>
</dbReference>
<dbReference type="GO" id="GO:0070006">
    <property type="term" value="F:metalloaminopeptidase activity"/>
    <property type="evidence" value="ECO:0007669"/>
    <property type="project" value="InterPro"/>
</dbReference>
<dbReference type="GO" id="GO:0006508">
    <property type="term" value="P:proteolysis"/>
    <property type="evidence" value="ECO:0007669"/>
    <property type="project" value="UniProtKB-KW"/>
</dbReference>
<dbReference type="CDD" id="cd00433">
    <property type="entry name" value="Peptidase_M17"/>
    <property type="match status" value="1"/>
</dbReference>
<dbReference type="FunFam" id="3.40.220.10:FF:000001">
    <property type="entry name" value="Probable cytosol aminopeptidase"/>
    <property type="match status" value="1"/>
</dbReference>
<dbReference type="FunFam" id="3.40.630.10:FF:000004">
    <property type="entry name" value="Probable cytosol aminopeptidase"/>
    <property type="match status" value="1"/>
</dbReference>
<dbReference type="Gene3D" id="3.40.220.10">
    <property type="entry name" value="Leucine Aminopeptidase, subunit E, domain 1"/>
    <property type="match status" value="1"/>
</dbReference>
<dbReference type="Gene3D" id="3.40.630.10">
    <property type="entry name" value="Zn peptidases"/>
    <property type="match status" value="1"/>
</dbReference>
<dbReference type="HAMAP" id="MF_00181">
    <property type="entry name" value="Cytosol_peptidase_M17"/>
    <property type="match status" value="1"/>
</dbReference>
<dbReference type="InterPro" id="IPR011356">
    <property type="entry name" value="Leucine_aapep/pepB"/>
</dbReference>
<dbReference type="InterPro" id="IPR043472">
    <property type="entry name" value="Macro_dom-like"/>
</dbReference>
<dbReference type="InterPro" id="IPR000819">
    <property type="entry name" value="Peptidase_M17_C"/>
</dbReference>
<dbReference type="InterPro" id="IPR023042">
    <property type="entry name" value="Peptidase_M17_leu_NH2_pept"/>
</dbReference>
<dbReference type="InterPro" id="IPR008283">
    <property type="entry name" value="Peptidase_M17_N"/>
</dbReference>
<dbReference type="NCBIfam" id="NF002072">
    <property type="entry name" value="PRK00913.1-1"/>
    <property type="match status" value="1"/>
</dbReference>
<dbReference type="NCBIfam" id="NF002073">
    <property type="entry name" value="PRK00913.1-2"/>
    <property type="match status" value="1"/>
</dbReference>
<dbReference type="NCBIfam" id="NF002074">
    <property type="entry name" value="PRK00913.1-4"/>
    <property type="match status" value="1"/>
</dbReference>
<dbReference type="PANTHER" id="PTHR11963:SF23">
    <property type="entry name" value="CYTOSOL AMINOPEPTIDASE"/>
    <property type="match status" value="1"/>
</dbReference>
<dbReference type="PANTHER" id="PTHR11963">
    <property type="entry name" value="LEUCINE AMINOPEPTIDASE-RELATED"/>
    <property type="match status" value="1"/>
</dbReference>
<dbReference type="Pfam" id="PF00883">
    <property type="entry name" value="Peptidase_M17"/>
    <property type="match status" value="1"/>
</dbReference>
<dbReference type="Pfam" id="PF02789">
    <property type="entry name" value="Peptidase_M17_N"/>
    <property type="match status" value="1"/>
</dbReference>
<dbReference type="PRINTS" id="PR00481">
    <property type="entry name" value="LAMNOPPTDASE"/>
</dbReference>
<dbReference type="SUPFAM" id="SSF52949">
    <property type="entry name" value="Macro domain-like"/>
    <property type="match status" value="1"/>
</dbReference>
<dbReference type="SUPFAM" id="SSF53187">
    <property type="entry name" value="Zn-dependent exopeptidases"/>
    <property type="match status" value="1"/>
</dbReference>
<dbReference type="PROSITE" id="PS00631">
    <property type="entry name" value="CYTOSOL_AP"/>
    <property type="match status" value="1"/>
</dbReference>
<sequence length="499" mass="54219">MEFSVKNGSVEKQRTACLVVGVYEPRRLSAAAEQLDKLSEGYISTLLRRGDLEGKAGQTLLLHNVPNVPADRVLLVGCGKERELTERQYKQIIQKMVQAVSETGSMEVVCFLTELHVKGRTSYWNVRFAIEAIQESLYSYNDFKSIKPEVRREFRRVIFNVANRKDLADAERALEHGKAISTGVAFAKNVANCPPNVCNPAYLAELAKGLAAEYDNIRTTVIDEAEMAALGMNAYLAVSRGSQNPAYLSVIEYKNHPNPDAKPIVLVGKGLTFDSGGISIKPSDSMDEMKYDMGGAASVYGTMKALAEMKLPLNVIGVLAGCENMPDGNAYRPGDILTTMNGLTVEVLNTDAEGRLVLCDTLTYVERFEPELVIDMATLTGACMIALGAHNSGLMSTSNVLANELLNAAEQADDKAWRLPLGEEYQEQLKSNFADLANIGGRLGGAITAGQFLSNFTKKYSWAHLDIAGTAWKSGAAKGATGRPVSLLSQFLINKANNQ</sequence>
<organism>
    <name type="scientific">Actinobacillus pleuropneumoniae serotype 5b (strain L20)</name>
    <dbReference type="NCBI Taxonomy" id="416269"/>
    <lineage>
        <taxon>Bacteria</taxon>
        <taxon>Pseudomonadati</taxon>
        <taxon>Pseudomonadota</taxon>
        <taxon>Gammaproteobacteria</taxon>
        <taxon>Pasteurellales</taxon>
        <taxon>Pasteurellaceae</taxon>
        <taxon>Actinobacillus</taxon>
    </lineage>
</organism>
<gene>
    <name evidence="1" type="primary">pepA</name>
    <name type="ordered locus">APL_1101</name>
</gene>
<proteinExistence type="inferred from homology"/>
<feature type="chain" id="PRO_1000019874" description="Probable cytosol aminopeptidase">
    <location>
        <begin position="1"/>
        <end position="499"/>
    </location>
</feature>
<feature type="active site" evidence="1">
    <location>
        <position position="281"/>
    </location>
</feature>
<feature type="active site" evidence="1">
    <location>
        <position position="355"/>
    </location>
</feature>
<feature type="binding site" evidence="1">
    <location>
        <position position="269"/>
    </location>
    <ligand>
        <name>Mn(2+)</name>
        <dbReference type="ChEBI" id="CHEBI:29035"/>
        <label>2</label>
    </ligand>
</feature>
<feature type="binding site" evidence="1">
    <location>
        <position position="274"/>
    </location>
    <ligand>
        <name>Mn(2+)</name>
        <dbReference type="ChEBI" id="CHEBI:29035"/>
        <label>1</label>
    </ligand>
</feature>
<feature type="binding site" evidence="1">
    <location>
        <position position="274"/>
    </location>
    <ligand>
        <name>Mn(2+)</name>
        <dbReference type="ChEBI" id="CHEBI:29035"/>
        <label>2</label>
    </ligand>
</feature>
<feature type="binding site" evidence="1">
    <location>
        <position position="292"/>
    </location>
    <ligand>
        <name>Mn(2+)</name>
        <dbReference type="ChEBI" id="CHEBI:29035"/>
        <label>2</label>
    </ligand>
</feature>
<feature type="binding site" evidence="1">
    <location>
        <position position="351"/>
    </location>
    <ligand>
        <name>Mn(2+)</name>
        <dbReference type="ChEBI" id="CHEBI:29035"/>
        <label>1</label>
    </ligand>
</feature>
<feature type="binding site" evidence="1">
    <location>
        <position position="353"/>
    </location>
    <ligand>
        <name>Mn(2+)</name>
        <dbReference type="ChEBI" id="CHEBI:29035"/>
        <label>1</label>
    </ligand>
</feature>
<feature type="binding site" evidence="1">
    <location>
        <position position="353"/>
    </location>
    <ligand>
        <name>Mn(2+)</name>
        <dbReference type="ChEBI" id="CHEBI:29035"/>
        <label>2</label>
    </ligand>
</feature>
<comment type="function">
    <text evidence="1">Presumably involved in the processing and regular turnover of intracellular proteins. Catalyzes the removal of unsubstituted N-terminal amino acids from various peptides.</text>
</comment>
<comment type="catalytic activity">
    <reaction evidence="1">
        <text>Release of an N-terminal amino acid, Xaa-|-Yaa-, in which Xaa is preferably Leu, but may be other amino acids including Pro although not Arg or Lys, and Yaa may be Pro. Amino acid amides and methyl esters are also readily hydrolyzed, but rates on arylamides are exceedingly low.</text>
        <dbReference type="EC" id="3.4.11.1"/>
    </reaction>
</comment>
<comment type="catalytic activity">
    <reaction evidence="1">
        <text>Release of an N-terminal amino acid, preferentially leucine, but not glutamic or aspartic acids.</text>
        <dbReference type="EC" id="3.4.11.10"/>
    </reaction>
</comment>
<comment type="cofactor">
    <cofactor evidence="1">
        <name>Mn(2+)</name>
        <dbReference type="ChEBI" id="CHEBI:29035"/>
    </cofactor>
    <text evidence="1">Binds 2 manganese ions per subunit.</text>
</comment>
<comment type="subcellular location">
    <subcellularLocation>
        <location evidence="1">Cytoplasm</location>
    </subcellularLocation>
</comment>
<comment type="similarity">
    <text evidence="1">Belongs to the peptidase M17 family.</text>
</comment>
<name>AMPA_ACTP2</name>
<evidence type="ECO:0000255" key="1">
    <source>
        <dbReference type="HAMAP-Rule" id="MF_00181"/>
    </source>
</evidence>